<proteinExistence type="evidence at transcript level"/>
<feature type="chain" id="PRO_0000144368" description="ATP synthase subunit alpha, chloroplastic">
    <location>
        <begin position="1"/>
        <end position="507"/>
    </location>
</feature>
<feature type="binding site" evidence="1">
    <location>
        <begin position="170"/>
        <end position="177"/>
    </location>
    <ligand>
        <name>ATP</name>
        <dbReference type="ChEBI" id="CHEBI:30616"/>
    </ligand>
</feature>
<feature type="site" description="Required for activity" evidence="1">
    <location>
        <position position="363"/>
    </location>
</feature>
<evidence type="ECO:0000255" key="1">
    <source>
        <dbReference type="HAMAP-Rule" id="MF_01346"/>
    </source>
</evidence>
<evidence type="ECO:0000269" key="2">
    <source>
    </source>
</evidence>
<evidence type="ECO:0000269" key="3">
    <source>
    </source>
</evidence>
<name>ATPA_ANTAG</name>
<gene>
    <name evidence="1" type="primary">atpA</name>
</gene>
<accession>Q85AU2</accession>
<protein>
    <recommendedName>
        <fullName evidence="1">ATP synthase subunit alpha, chloroplastic</fullName>
        <ecNumber evidence="1">7.1.2.2</ecNumber>
    </recommendedName>
    <alternativeName>
        <fullName evidence="1">ATP synthase F1 sector subunit alpha</fullName>
    </alternativeName>
    <alternativeName>
        <fullName evidence="1">F-ATPase subunit alpha</fullName>
    </alternativeName>
</protein>
<keyword id="KW-0066">ATP synthesis</keyword>
<keyword id="KW-0067">ATP-binding</keyword>
<keyword id="KW-0139">CF(1)</keyword>
<keyword id="KW-0150">Chloroplast</keyword>
<keyword id="KW-0375">Hydrogen ion transport</keyword>
<keyword id="KW-0406">Ion transport</keyword>
<keyword id="KW-0472">Membrane</keyword>
<keyword id="KW-0547">Nucleotide-binding</keyword>
<keyword id="KW-0934">Plastid</keyword>
<keyword id="KW-0691">RNA editing</keyword>
<keyword id="KW-0793">Thylakoid</keyword>
<keyword id="KW-1278">Translocase</keyword>
<keyword id="KW-0813">Transport</keyword>
<reference key="1">
    <citation type="journal article" date="2003" name="Nucleic Acids Res.">
        <title>The complete nucleotide sequence of the hornwort (Anthoceros formosae) chloroplast genome: insight into the earliest land plants.</title>
        <authorList>
            <person name="Kugita M."/>
            <person name="Kaneko A."/>
            <person name="Yamamoto Y."/>
            <person name="Takeya Y."/>
            <person name="Matsumoto T."/>
            <person name="Yoshinaga K."/>
        </authorList>
    </citation>
    <scope>NUCLEOTIDE SEQUENCE [LARGE SCALE GENOMIC DNA]</scope>
    <scope>RNA EDITING</scope>
</reference>
<reference key="2">
    <citation type="journal article" date="2003" name="Nucleic Acids Res.">
        <title>RNA editing in hornwort chloroplasts makes more than half the genes functional.</title>
        <authorList>
            <person name="Kugita M."/>
            <person name="Yamamoto Y."/>
            <person name="Fujikawa T."/>
            <person name="Matsumoto T."/>
            <person name="Yoshinaga K."/>
        </authorList>
    </citation>
    <scope>NUCLEOTIDE SEQUENCE [MRNA]</scope>
    <scope>RNA EDITING</scope>
    <source>
        <tissue>Thallus</tissue>
    </source>
</reference>
<sequence>MVNIRPDEISNIIRKQIEQYNQEVKVINIGTVLQVGDGIARIYGLDKVMAGELVEFEDGTVGIALNLESDNVGVVLMGDGLSIQEGSSVEATGKIAQIPVSDAYLGRVVNALAQPIDGKGQIPAYEFRLIESPAPGIISRRSVYEPMQTGLIAIDSMIPIGRGQRELIIGDRQTGKTAVATDTILNQKGQNVICVYVAIGQKASSVAQVVNTFEERGALEYTIVVAETADSPATLQYLAPYTGAALAEYFMYRKQHTLIIYDDLSKQAQAYRQMSLLLRRPPGREAYPGDVFYLHSRLLERAAKLSSQLGEGSMTALPIVETQAGDVSAYIPTNVISITDGQIFLSADLFNAGIRPAINVGISVSRVGSAAQIKAMKQVAGKLKLELAQFAELEAFAQFASDLDKATQNQLARGQRLRELLKQSQSAPLAVEEQVATIYTGVNGYLDVLEVEQVKKFLVQLREYLITNKPQFVEIIRSTKVFTEQAEIILKEAIKEHTEFFLLQEQK</sequence>
<geneLocation type="chloroplast"/>
<organism>
    <name type="scientific">Anthoceros angustus</name>
    <name type="common">Hornwort</name>
    <name type="synonym">Anthoceros formosae</name>
    <dbReference type="NCBI Taxonomy" id="48387"/>
    <lineage>
        <taxon>Eukaryota</taxon>
        <taxon>Viridiplantae</taxon>
        <taxon>Streptophyta</taxon>
        <taxon>Embryophyta</taxon>
        <taxon>Anthocerotophyta</taxon>
        <taxon>Anthocerotopsida</taxon>
        <taxon>Anthocerotidae</taxon>
        <taxon>Anthocerotales</taxon>
        <taxon>Anthocerotaceae</taxon>
        <taxon>Anthoceros</taxon>
    </lineage>
</organism>
<dbReference type="EC" id="7.1.2.2" evidence="1"/>
<dbReference type="EMBL" id="AB086179">
    <property type="protein sequence ID" value="BAC55333.1"/>
    <property type="molecule type" value="Genomic_DNA"/>
</dbReference>
<dbReference type="EMBL" id="AB087425">
    <property type="protein sequence ID" value="BAC55424.1"/>
    <property type="molecule type" value="mRNA"/>
</dbReference>
<dbReference type="RefSeq" id="NP_777397.1">
    <property type="nucleotide sequence ID" value="NC_004543.1"/>
</dbReference>
<dbReference type="SMR" id="Q85AU2"/>
<dbReference type="GeneID" id="2553480"/>
<dbReference type="GO" id="GO:0009535">
    <property type="term" value="C:chloroplast thylakoid membrane"/>
    <property type="evidence" value="ECO:0007669"/>
    <property type="project" value="UniProtKB-SubCell"/>
</dbReference>
<dbReference type="GO" id="GO:0045259">
    <property type="term" value="C:proton-transporting ATP synthase complex"/>
    <property type="evidence" value="ECO:0007669"/>
    <property type="project" value="UniProtKB-KW"/>
</dbReference>
<dbReference type="GO" id="GO:0043531">
    <property type="term" value="F:ADP binding"/>
    <property type="evidence" value="ECO:0007669"/>
    <property type="project" value="TreeGrafter"/>
</dbReference>
<dbReference type="GO" id="GO:0005524">
    <property type="term" value="F:ATP binding"/>
    <property type="evidence" value="ECO:0007669"/>
    <property type="project" value="UniProtKB-UniRule"/>
</dbReference>
<dbReference type="GO" id="GO:0046933">
    <property type="term" value="F:proton-transporting ATP synthase activity, rotational mechanism"/>
    <property type="evidence" value="ECO:0007669"/>
    <property type="project" value="UniProtKB-UniRule"/>
</dbReference>
<dbReference type="CDD" id="cd18113">
    <property type="entry name" value="ATP-synt_F1_alpha_C"/>
    <property type="match status" value="1"/>
</dbReference>
<dbReference type="CDD" id="cd18116">
    <property type="entry name" value="ATP-synt_F1_alpha_N"/>
    <property type="match status" value="1"/>
</dbReference>
<dbReference type="CDD" id="cd01132">
    <property type="entry name" value="F1-ATPase_alpha_CD"/>
    <property type="match status" value="1"/>
</dbReference>
<dbReference type="FunFam" id="1.20.150.20:FF:000001">
    <property type="entry name" value="ATP synthase subunit alpha"/>
    <property type="match status" value="1"/>
</dbReference>
<dbReference type="FunFam" id="2.40.30.20:FF:000001">
    <property type="entry name" value="ATP synthase subunit alpha"/>
    <property type="match status" value="1"/>
</dbReference>
<dbReference type="FunFam" id="3.40.50.300:FF:000002">
    <property type="entry name" value="ATP synthase subunit alpha"/>
    <property type="match status" value="1"/>
</dbReference>
<dbReference type="Gene3D" id="2.40.30.20">
    <property type="match status" value="1"/>
</dbReference>
<dbReference type="Gene3D" id="1.20.150.20">
    <property type="entry name" value="ATP synthase alpha/beta chain, C-terminal domain"/>
    <property type="match status" value="1"/>
</dbReference>
<dbReference type="Gene3D" id="3.40.50.300">
    <property type="entry name" value="P-loop containing nucleotide triphosphate hydrolases"/>
    <property type="match status" value="1"/>
</dbReference>
<dbReference type="HAMAP" id="MF_01346">
    <property type="entry name" value="ATP_synth_alpha_bact"/>
    <property type="match status" value="1"/>
</dbReference>
<dbReference type="InterPro" id="IPR023366">
    <property type="entry name" value="ATP_synth_asu-like_sf"/>
</dbReference>
<dbReference type="InterPro" id="IPR000793">
    <property type="entry name" value="ATP_synth_asu_C"/>
</dbReference>
<dbReference type="InterPro" id="IPR038376">
    <property type="entry name" value="ATP_synth_asu_C_sf"/>
</dbReference>
<dbReference type="InterPro" id="IPR033732">
    <property type="entry name" value="ATP_synth_F1_a_nt-bd_dom"/>
</dbReference>
<dbReference type="InterPro" id="IPR005294">
    <property type="entry name" value="ATP_synth_F1_asu"/>
</dbReference>
<dbReference type="InterPro" id="IPR020003">
    <property type="entry name" value="ATPase_a/bsu_AS"/>
</dbReference>
<dbReference type="InterPro" id="IPR004100">
    <property type="entry name" value="ATPase_F1/V1/A1_a/bsu_N"/>
</dbReference>
<dbReference type="InterPro" id="IPR036121">
    <property type="entry name" value="ATPase_F1/V1/A1_a/bsu_N_sf"/>
</dbReference>
<dbReference type="InterPro" id="IPR000194">
    <property type="entry name" value="ATPase_F1/V1/A1_a/bsu_nucl-bd"/>
</dbReference>
<dbReference type="InterPro" id="IPR027417">
    <property type="entry name" value="P-loop_NTPase"/>
</dbReference>
<dbReference type="NCBIfam" id="TIGR00962">
    <property type="entry name" value="atpA"/>
    <property type="match status" value="1"/>
</dbReference>
<dbReference type="NCBIfam" id="NF009884">
    <property type="entry name" value="PRK13343.1"/>
    <property type="match status" value="1"/>
</dbReference>
<dbReference type="PANTHER" id="PTHR48082">
    <property type="entry name" value="ATP SYNTHASE SUBUNIT ALPHA, MITOCHONDRIAL"/>
    <property type="match status" value="1"/>
</dbReference>
<dbReference type="PANTHER" id="PTHR48082:SF2">
    <property type="entry name" value="ATP SYNTHASE SUBUNIT ALPHA, MITOCHONDRIAL"/>
    <property type="match status" value="1"/>
</dbReference>
<dbReference type="Pfam" id="PF00006">
    <property type="entry name" value="ATP-synt_ab"/>
    <property type="match status" value="1"/>
</dbReference>
<dbReference type="Pfam" id="PF00306">
    <property type="entry name" value="ATP-synt_ab_C"/>
    <property type="match status" value="1"/>
</dbReference>
<dbReference type="Pfam" id="PF02874">
    <property type="entry name" value="ATP-synt_ab_N"/>
    <property type="match status" value="1"/>
</dbReference>
<dbReference type="PIRSF" id="PIRSF039088">
    <property type="entry name" value="F_ATPase_subunit_alpha"/>
    <property type="match status" value="1"/>
</dbReference>
<dbReference type="SUPFAM" id="SSF47917">
    <property type="entry name" value="C-terminal domain of alpha and beta subunits of F1 ATP synthase"/>
    <property type="match status" value="1"/>
</dbReference>
<dbReference type="SUPFAM" id="SSF50615">
    <property type="entry name" value="N-terminal domain of alpha and beta subunits of F1 ATP synthase"/>
    <property type="match status" value="1"/>
</dbReference>
<dbReference type="SUPFAM" id="SSF52540">
    <property type="entry name" value="P-loop containing nucleoside triphosphate hydrolases"/>
    <property type="match status" value="1"/>
</dbReference>
<dbReference type="PROSITE" id="PS00152">
    <property type="entry name" value="ATPASE_ALPHA_BETA"/>
    <property type="match status" value="1"/>
</dbReference>
<comment type="function">
    <text evidence="1">Produces ATP from ADP in the presence of a proton gradient across the membrane. The alpha chain is a regulatory subunit.</text>
</comment>
<comment type="catalytic activity">
    <reaction evidence="1">
        <text>ATP + H2O + 4 H(+)(in) = ADP + phosphate + 5 H(+)(out)</text>
        <dbReference type="Rhea" id="RHEA:57720"/>
        <dbReference type="ChEBI" id="CHEBI:15377"/>
        <dbReference type="ChEBI" id="CHEBI:15378"/>
        <dbReference type="ChEBI" id="CHEBI:30616"/>
        <dbReference type="ChEBI" id="CHEBI:43474"/>
        <dbReference type="ChEBI" id="CHEBI:456216"/>
        <dbReference type="EC" id="7.1.2.2"/>
    </reaction>
</comment>
<comment type="subunit">
    <text evidence="1">F-type ATPases have 2 components, CF(1) - the catalytic core - and CF(0) - the membrane proton channel. CF(1) has five subunits: alpha(3), beta(3), gamma(1), delta(1), epsilon(1). CF(0) has four main subunits: a, b, b' and c.</text>
</comment>
<comment type="subcellular location">
    <subcellularLocation>
        <location evidence="1">Plastid</location>
        <location evidence="1">Chloroplast thylakoid membrane</location>
        <topology evidence="1">Peripheral membrane protein</topology>
    </subcellularLocation>
</comment>
<comment type="RNA editing">
    <location>
        <position position="22" evidence="2 3"/>
    </location>
    <location>
        <position position="41" evidence="2 3"/>
    </location>
    <location>
        <position position="56" evidence="2 3"/>
    </location>
    <location>
        <position position="76" evidence="2 3"/>
    </location>
    <location>
        <position position="105" evidence="2 3"/>
    </location>
    <location>
        <position position="107" evidence="2 3"/>
    </location>
    <location>
        <position position="109" evidence="2 3"/>
    </location>
    <location>
        <position position="135" evidence="2 3"/>
    </location>
    <location>
        <position position="146" evidence="2 3"/>
    </location>
    <location>
        <position position="160" evidence="2 3"/>
    </location>
    <location>
        <position position="162" evidence="2 3"/>
    </location>
    <location>
        <position position="246" evidence="2 3"/>
    </location>
    <location>
        <position position="250" evidence="2 3"/>
    </location>
    <location>
        <position position="258" evidence="2 3"/>
    </location>
    <location>
        <position position="267" evidence="2 3"/>
    </location>
    <location>
        <position position="269" evidence="2 3"/>
    </location>
    <location>
        <position position="331" evidence="2 3"/>
    </location>
    <location>
        <position position="350" evidence="2 3"/>
    </location>
    <location>
        <position position="378" evidence="2 3"/>
    </location>
    <location>
        <position position="383" evidence="2 3"/>
    </location>
    <location>
        <position position="425" evidence="2 3"/>
    </location>
    <location>
        <position position="446" evidence="2 3"/>
    </location>
    <location>
        <position position="453" evidence="2 3"/>
    </location>
    <location>
        <position position="494" evidence="2 3"/>
    </location>
    <location>
        <position position="502" evidence="2 3"/>
    </location>
    <text>The nonsense codons at positions 22, 267, 269, 378, 425 and 453 are modified to sense codons.</text>
</comment>
<comment type="similarity">
    <text evidence="1">Belongs to the ATPase alpha/beta chains family.</text>
</comment>